<accession>Q27380</accession>
<evidence type="ECO:0000250" key="1">
    <source>
        <dbReference type="UniProtKB" id="P68363"/>
    </source>
</evidence>
<evidence type="ECO:0000250" key="2">
    <source>
        <dbReference type="UniProtKB" id="Q13509"/>
    </source>
</evidence>
<evidence type="ECO:0000256" key="3">
    <source>
        <dbReference type="SAM" id="MobiDB-lite"/>
    </source>
</evidence>
<evidence type="ECO:0000305" key="4"/>
<comment type="function">
    <text>Tubulin is the major constituent of microtubules, a cylinder consisting of laterally associated linear protofilaments composed of alpha- and beta-tubulin heterodimers. Microtubules grow by the addition of GTP-tubulin dimers to the microtubule end, where a stabilizing cap forms. Below the cap, tubulin dimers are in GDP-bound state, owing to GTPase activity of alpha-tubulin.</text>
</comment>
<comment type="cofactor">
    <cofactor evidence="1">
        <name>Mg(2+)</name>
        <dbReference type="ChEBI" id="CHEBI:18420"/>
    </cofactor>
</comment>
<comment type="subunit">
    <text>Dimer of alpha and beta chains. A typical microtubule is a hollow water-filled tube with an outer diameter of 25 nm and an inner diameter of 15 nM. Alpha-beta heterodimers associate head-to-tail to form protofilaments running lengthwise along the microtubule wall with the beta-tubulin subunit facing the microtubule plus end conferring a structural polarity. Microtubules usually have 13 protofilaments but different protofilament numbers can be found in some organisms and specialized cells.</text>
</comment>
<comment type="subcellular location">
    <subcellularLocation>
        <location>Cytoplasm</location>
        <location>Cytoskeleton</location>
    </subcellularLocation>
</comment>
<comment type="similarity">
    <text evidence="4">Belongs to the tubulin family.</text>
</comment>
<sequence>MREIVHVQGGQCGNQIGAKFWEVISDEHGIAPTGTYKGDSDLQLERISVFYNEATGGRYVPRAVLMDLEPGTMDSVRSGPFGQLFRPDNFVFGQTGAGNNWAKGHYTEGAELIDSVLDVVRKEAEGCDCLQGFQVTHSLGGGTGSGMGTLLISKVREEYPDRIMETFSVFPSPKVSDTVVEPYNATLSVHQLVENADEVQVIDNEALYDICFRTLKLTTPTYGDLNHLVSAAMSGVTCSLRFPGQLNSDLRKLAVNLVPFPRLHFFLIGFAPLTSRGSQQYRALTVPELTQQMFDAKNMMCASDPRHGRYLTACALFRGRMSTKEVDEQMLNVQNKNSSYFVEWIPNNMKSGVCDIPPKGLKMSVTFVGNSTAIQEMFKRVSDQFTAMFRRKAFLHWYTGEGMDEMEFTEAESNMNDLVSEYQQYQDATAEEEGEFDEEEGVMDAEGAA</sequence>
<reference key="1">
    <citation type="journal article" date="1996" name="Mol. Biochem. Parasitol.">
        <title>The beta tubulin gene of Eimeria tenella.</title>
        <authorList>
            <person name="Zhu G."/>
            <person name="Keithly J.S."/>
        </authorList>
    </citation>
    <scope>NUCLEOTIDE SEQUENCE [GENOMIC DNA / MRNA]</scope>
    <source>
        <strain>Wisconsin</strain>
    </source>
</reference>
<keyword id="KW-0963">Cytoplasm</keyword>
<keyword id="KW-0206">Cytoskeleton</keyword>
<keyword id="KW-0342">GTP-binding</keyword>
<keyword id="KW-0460">Magnesium</keyword>
<keyword id="KW-0479">Metal-binding</keyword>
<keyword id="KW-0493">Microtubule</keyword>
<keyword id="KW-0547">Nucleotide-binding</keyword>
<dbReference type="EMBL" id="U19609">
    <property type="protein sequence ID" value="AAB41262.1"/>
    <property type="molecule type" value="Genomic_DNA"/>
</dbReference>
<dbReference type="EMBL" id="U19268">
    <property type="protein sequence ID" value="AAB41261.1"/>
    <property type="molecule type" value="mRNA"/>
</dbReference>
<dbReference type="RefSeq" id="XP_013228349.1">
    <property type="nucleotide sequence ID" value="XM_013372895.1"/>
</dbReference>
<dbReference type="SMR" id="Q27380"/>
<dbReference type="GeneID" id="25249719"/>
<dbReference type="VEuPathDB" id="ToxoDB:ETH2_0401900"/>
<dbReference type="VEuPathDB" id="ToxoDB:ETH_00002520"/>
<dbReference type="OMA" id="WVPRSVN"/>
<dbReference type="OrthoDB" id="1662883at2759"/>
<dbReference type="GO" id="GO:0005737">
    <property type="term" value="C:cytoplasm"/>
    <property type="evidence" value="ECO:0007669"/>
    <property type="project" value="UniProtKB-KW"/>
</dbReference>
<dbReference type="GO" id="GO:0005874">
    <property type="term" value="C:microtubule"/>
    <property type="evidence" value="ECO:0007669"/>
    <property type="project" value="UniProtKB-KW"/>
</dbReference>
<dbReference type="GO" id="GO:0005525">
    <property type="term" value="F:GTP binding"/>
    <property type="evidence" value="ECO:0007669"/>
    <property type="project" value="UniProtKB-KW"/>
</dbReference>
<dbReference type="GO" id="GO:0003924">
    <property type="term" value="F:GTPase activity"/>
    <property type="evidence" value="ECO:0007669"/>
    <property type="project" value="InterPro"/>
</dbReference>
<dbReference type="GO" id="GO:0046872">
    <property type="term" value="F:metal ion binding"/>
    <property type="evidence" value="ECO:0007669"/>
    <property type="project" value="UniProtKB-KW"/>
</dbReference>
<dbReference type="GO" id="GO:0005200">
    <property type="term" value="F:structural constituent of cytoskeleton"/>
    <property type="evidence" value="ECO:0007669"/>
    <property type="project" value="InterPro"/>
</dbReference>
<dbReference type="GO" id="GO:0007017">
    <property type="term" value="P:microtubule-based process"/>
    <property type="evidence" value="ECO:0007669"/>
    <property type="project" value="InterPro"/>
</dbReference>
<dbReference type="CDD" id="cd02187">
    <property type="entry name" value="beta_tubulin"/>
    <property type="match status" value="1"/>
</dbReference>
<dbReference type="FunFam" id="1.10.287.600:FF:000006">
    <property type="entry name" value="Tubulin beta chain"/>
    <property type="match status" value="1"/>
</dbReference>
<dbReference type="FunFam" id="3.30.1330.20:FF:000002">
    <property type="entry name" value="Tubulin beta chain"/>
    <property type="match status" value="1"/>
</dbReference>
<dbReference type="FunFam" id="3.40.50.1440:FF:000005">
    <property type="entry name" value="Tubulin beta chain"/>
    <property type="match status" value="1"/>
</dbReference>
<dbReference type="Gene3D" id="1.10.287.600">
    <property type="entry name" value="Helix hairpin bin"/>
    <property type="match status" value="1"/>
</dbReference>
<dbReference type="Gene3D" id="3.30.1330.20">
    <property type="entry name" value="Tubulin/FtsZ, C-terminal domain"/>
    <property type="match status" value="1"/>
</dbReference>
<dbReference type="Gene3D" id="3.40.50.1440">
    <property type="entry name" value="Tubulin/FtsZ, GTPase domain"/>
    <property type="match status" value="1"/>
</dbReference>
<dbReference type="InterPro" id="IPR013838">
    <property type="entry name" value="Beta-tubulin_BS"/>
</dbReference>
<dbReference type="InterPro" id="IPR002453">
    <property type="entry name" value="Beta_tubulin"/>
</dbReference>
<dbReference type="InterPro" id="IPR008280">
    <property type="entry name" value="Tub_FtsZ_C"/>
</dbReference>
<dbReference type="InterPro" id="IPR000217">
    <property type="entry name" value="Tubulin"/>
</dbReference>
<dbReference type="InterPro" id="IPR037103">
    <property type="entry name" value="Tubulin/FtsZ-like_C"/>
</dbReference>
<dbReference type="InterPro" id="IPR018316">
    <property type="entry name" value="Tubulin/FtsZ_2-layer-sand-dom"/>
</dbReference>
<dbReference type="InterPro" id="IPR036525">
    <property type="entry name" value="Tubulin/FtsZ_GTPase_sf"/>
</dbReference>
<dbReference type="InterPro" id="IPR023123">
    <property type="entry name" value="Tubulin_C"/>
</dbReference>
<dbReference type="InterPro" id="IPR017975">
    <property type="entry name" value="Tubulin_CS"/>
</dbReference>
<dbReference type="InterPro" id="IPR003008">
    <property type="entry name" value="Tubulin_FtsZ_GTPase"/>
</dbReference>
<dbReference type="PANTHER" id="PTHR11588">
    <property type="entry name" value="TUBULIN"/>
    <property type="match status" value="1"/>
</dbReference>
<dbReference type="Pfam" id="PF00091">
    <property type="entry name" value="Tubulin"/>
    <property type="match status" value="1"/>
</dbReference>
<dbReference type="Pfam" id="PF03953">
    <property type="entry name" value="Tubulin_C"/>
    <property type="match status" value="1"/>
</dbReference>
<dbReference type="PRINTS" id="PR01163">
    <property type="entry name" value="BETATUBULIN"/>
</dbReference>
<dbReference type="PRINTS" id="PR01161">
    <property type="entry name" value="TUBULIN"/>
</dbReference>
<dbReference type="SMART" id="SM00864">
    <property type="entry name" value="Tubulin"/>
    <property type="match status" value="1"/>
</dbReference>
<dbReference type="SMART" id="SM00865">
    <property type="entry name" value="Tubulin_C"/>
    <property type="match status" value="1"/>
</dbReference>
<dbReference type="SUPFAM" id="SSF55307">
    <property type="entry name" value="Tubulin C-terminal domain-like"/>
    <property type="match status" value="1"/>
</dbReference>
<dbReference type="SUPFAM" id="SSF52490">
    <property type="entry name" value="Tubulin nucleotide-binding domain-like"/>
    <property type="match status" value="1"/>
</dbReference>
<dbReference type="PROSITE" id="PS00227">
    <property type="entry name" value="TUBULIN"/>
    <property type="match status" value="1"/>
</dbReference>
<dbReference type="PROSITE" id="PS00228">
    <property type="entry name" value="TUBULIN_B_AUTOREG"/>
    <property type="match status" value="1"/>
</dbReference>
<protein>
    <recommendedName>
        <fullName>Tubulin beta chain</fullName>
    </recommendedName>
    <alternativeName>
        <fullName>Beta-tubulin</fullName>
    </alternativeName>
</protein>
<feature type="chain" id="PRO_0000048293" description="Tubulin beta chain">
    <location>
        <begin position="1"/>
        <end position="449"/>
    </location>
</feature>
<feature type="region of interest" description="Disordered" evidence="3">
    <location>
        <begin position="426"/>
        <end position="449"/>
    </location>
</feature>
<feature type="compositionally biased region" description="Acidic residues" evidence="3">
    <location>
        <begin position="429"/>
        <end position="443"/>
    </location>
</feature>
<feature type="binding site" evidence="2">
    <location>
        <position position="11"/>
    </location>
    <ligand>
        <name>GTP</name>
        <dbReference type="ChEBI" id="CHEBI:37565"/>
    </ligand>
</feature>
<feature type="binding site" evidence="1">
    <location>
        <position position="69"/>
    </location>
    <ligand>
        <name>GTP</name>
        <dbReference type="ChEBI" id="CHEBI:37565"/>
    </ligand>
</feature>
<feature type="binding site" evidence="1">
    <location>
        <position position="69"/>
    </location>
    <ligand>
        <name>Mg(2+)</name>
        <dbReference type="ChEBI" id="CHEBI:18420"/>
    </ligand>
</feature>
<feature type="binding site" evidence="2">
    <location>
        <position position="138"/>
    </location>
    <ligand>
        <name>GTP</name>
        <dbReference type="ChEBI" id="CHEBI:37565"/>
    </ligand>
</feature>
<feature type="binding site" evidence="2">
    <location>
        <position position="142"/>
    </location>
    <ligand>
        <name>GTP</name>
        <dbReference type="ChEBI" id="CHEBI:37565"/>
    </ligand>
</feature>
<feature type="binding site" evidence="2">
    <location>
        <position position="143"/>
    </location>
    <ligand>
        <name>GTP</name>
        <dbReference type="ChEBI" id="CHEBI:37565"/>
    </ligand>
</feature>
<feature type="binding site" evidence="2">
    <location>
        <position position="144"/>
    </location>
    <ligand>
        <name>GTP</name>
        <dbReference type="ChEBI" id="CHEBI:37565"/>
    </ligand>
</feature>
<feature type="binding site" evidence="2">
    <location>
        <position position="204"/>
    </location>
    <ligand>
        <name>GTP</name>
        <dbReference type="ChEBI" id="CHEBI:37565"/>
    </ligand>
</feature>
<feature type="binding site" evidence="2">
    <location>
        <position position="226"/>
    </location>
    <ligand>
        <name>GTP</name>
        <dbReference type="ChEBI" id="CHEBI:37565"/>
    </ligand>
</feature>
<organism>
    <name type="scientific">Eimeria tenella</name>
    <name type="common">Coccidian parasite</name>
    <dbReference type="NCBI Taxonomy" id="5802"/>
    <lineage>
        <taxon>Eukaryota</taxon>
        <taxon>Sar</taxon>
        <taxon>Alveolata</taxon>
        <taxon>Apicomplexa</taxon>
        <taxon>Conoidasida</taxon>
        <taxon>Coccidia</taxon>
        <taxon>Eucoccidiorida</taxon>
        <taxon>Eimeriorina</taxon>
        <taxon>Eimeriidae</taxon>
        <taxon>Eimeria</taxon>
    </lineage>
</organism>
<proteinExistence type="evidence at transcript level"/>
<name>TBB_EIMTE</name>